<sequence length="583" mass="65575">MKKSYSGVTRTSSGRLRRLADPTGPALKRSFEVEEIEPPNSTPPRRVQTPLLRATVASSSQKFQDLGVKNSEPAARLVDSLSQRSPKPSLRRVELAGAKAPEPMSRRTEISIDISSKQVESTASAAGPSRFGLKRAEVLGHKTPEPVPRRTEITIVKPQESVLRRVETPASKIPEGSAVPATDAAPKRVEIQVPKPAEAPNCPLPSQTLENSEAPMSQLQSRLEPRPSVAEVPYRNQEDSEVTPSCVGDMADNPRDAMLKQAPASRNEKAPMEFGYVGIDSILEQMRRKAMKQGFEFNIMVVGQSGLGKSTLINTLFKSKISRKSVQPTSEERIPKTIEIKSITHDIEEKGVRMKLTVIDTPGFGDHINNENCWQPIMKFINDQYEKYLQEEVNINRKKRIPDTRVHCCLYFIPATGHSLRPLDIEFMKRLSKVVNIVPVIAKADTLTLEERVYFKQRITADLLSNGIDVYPQKEFDEDAEDRLVNEKFREMIPFAVVGSDHEYQVNGKRILGRKTKWGTIEVENTTHCEFAYLRDLLIRTHMQNIKDITSNIHFEAYRVKRLNEGNSAMANGIEKEPEAQEM</sequence>
<evidence type="ECO:0000250" key="1"/>
<evidence type="ECO:0000250" key="2">
    <source>
        <dbReference type="UniProtKB" id="Q9UHD8"/>
    </source>
</evidence>
<evidence type="ECO:0000255" key="3">
    <source>
        <dbReference type="PROSITE-ProRule" id="PRU01056"/>
    </source>
</evidence>
<evidence type="ECO:0000256" key="4">
    <source>
        <dbReference type="SAM" id="MobiDB-lite"/>
    </source>
</evidence>
<evidence type="ECO:0000269" key="5">
    <source>
    </source>
</evidence>
<evidence type="ECO:0000269" key="6">
    <source>
    </source>
</evidence>
<evidence type="ECO:0000269" key="7">
    <source>
    </source>
</evidence>
<evidence type="ECO:0000303" key="8">
    <source>
    </source>
</evidence>
<evidence type="ECO:0000303" key="9">
    <source>
    </source>
</evidence>
<evidence type="ECO:0000303" key="10">
    <source>
    </source>
</evidence>
<evidence type="ECO:0000305" key="11"/>
<evidence type="ECO:0000312" key="12">
    <source>
        <dbReference type="MGI" id="MGI:1858222"/>
    </source>
</evidence>
<evidence type="ECO:0007744" key="13">
    <source>
    </source>
</evidence>
<evidence type="ECO:0007744" key="14">
    <source>
    </source>
</evidence>
<evidence type="ECO:0007744" key="15">
    <source>
    </source>
</evidence>
<proteinExistence type="evidence at protein level"/>
<accession>Q80UG5</accession>
<accession>A2A6U2</accession>
<accession>A2A6U4</accession>
<accession>A2A6U6</accession>
<accession>Q3URP2</accession>
<accession>Q80TM7</accession>
<accession>Q9QYX9</accession>
<keyword id="KW-0007">Acetylation</keyword>
<keyword id="KW-0025">Alternative splicing</keyword>
<keyword id="KW-0131">Cell cycle</keyword>
<keyword id="KW-0132">Cell division</keyword>
<keyword id="KW-0963">Cytoplasm</keyword>
<keyword id="KW-0206">Cytoskeleton</keyword>
<keyword id="KW-0903">Direct protein sequencing</keyword>
<keyword id="KW-0342">GTP-binding</keyword>
<keyword id="KW-0547">Nucleotide-binding</keyword>
<keyword id="KW-0597">Phosphoprotein</keyword>
<keyword id="KW-1185">Reference proteome</keyword>
<organism>
    <name type="scientific">Mus musculus</name>
    <name type="common">Mouse</name>
    <dbReference type="NCBI Taxonomy" id="10090"/>
    <lineage>
        <taxon>Eukaryota</taxon>
        <taxon>Metazoa</taxon>
        <taxon>Chordata</taxon>
        <taxon>Craniata</taxon>
        <taxon>Vertebrata</taxon>
        <taxon>Euteleostomi</taxon>
        <taxon>Mammalia</taxon>
        <taxon>Eutheria</taxon>
        <taxon>Euarchontoglires</taxon>
        <taxon>Glires</taxon>
        <taxon>Rodentia</taxon>
        <taxon>Myomorpha</taxon>
        <taxon>Muroidea</taxon>
        <taxon>Muridae</taxon>
        <taxon>Murinae</taxon>
        <taxon>Mus</taxon>
        <taxon>Mus</taxon>
    </lineage>
</organism>
<protein>
    <recommendedName>
        <fullName>Septin-9</fullName>
    </recommendedName>
    <alternativeName>
        <fullName>SL3-3 integration site 1 protein</fullName>
    </alternativeName>
</protein>
<comment type="function">
    <text evidence="1 11">Filament-forming cytoskeletal GTPase (By similarity). May play a role in cytokinesis (Potential).</text>
</comment>
<comment type="subunit">
    <text evidence="1">Septins polymerize into heterooligomeric protein complexes that form filaments, and associate with cellular membranes, actin filaments, and microtubules. GTPase activity is required for filament formation. Interacts with SEPTIN2, SEPTIN6, SEPTIN7, SEPTIN11 and SEPTIN14. Interacts with RTKN and ARHGEF18 (By similarity).</text>
</comment>
<comment type="subcellular location">
    <subcellularLocation>
        <location evidence="7">Cytoplasm</location>
        <location evidence="7">Cytoskeleton</location>
    </subcellularLocation>
    <text>In an epithelial cell line, concentrates at cell-cell contact areas. After TGF-beta1 treatment and induction of epithelial to mesenchymal transition, colocalizes with actin stress fibers.</text>
</comment>
<comment type="alternative products">
    <event type="alternative splicing"/>
    <isoform>
        <id>Q80UG5-1</id>
        <name>1</name>
        <sequence type="displayed"/>
    </isoform>
    <isoform>
        <id>Q80UG5-2</id>
        <name>2</name>
        <sequence type="described" ref="VSP_012341"/>
    </isoform>
    <isoform>
        <id>Q80UG5-3</id>
        <name>3</name>
        <sequence type="described" ref="VSP_012342"/>
    </isoform>
</comment>
<comment type="tissue specificity">
    <text evidence="5 6">Expressed in all tissues examined except muscle. Isoforms are differentially expressed in testes, kidney, liver, heart, spleen and brain.</text>
</comment>
<comment type="developmental stage">
    <text evidence="6">At 8 dpc mainly expressed in the lateral plate mesoderm and the somites. Beginning at 9 dpc the lateral plate expression is clearly focused in the developing fore- and hindlimb buds. In the cephalic region, expressed in the first and second branchial arch, in the nasal process and around the otic pit. At 9.5 dpc strongest expression is observed in the mesenchyme of the branchial arches, the limbs, and the developing dorsal root ganglia. Weak to intermediate expression is found in the neural epithelium. Expression is seen in the newly formed somites in the tail bud of older embryos. During formation of the digits, expression seems to outline the surviving tissue bordering it towards the apoptotic webbing. Expression is seen in the developing outer ear and in several areas known to be regulated by intensive epithelial mesenchymal interactions, like the viscera follicles and the developing mammary glands.</text>
</comment>
<comment type="disease">
    <text>Putative proto-oncogene involved in T-cell lymphomagenesis. May play a role in leukemogenesis.</text>
</comment>
<comment type="miscellaneous">
    <text>Targeted by proviral insertion in T-cell lymphomas induced by the murine retrovirus SL3-3 MuLV.</text>
</comment>
<comment type="similarity">
    <text evidence="3">Belongs to the TRAFAC class TrmE-Era-EngA-EngB-Septin-like GTPase superfamily. Septin GTPase family.</text>
</comment>
<comment type="sequence caution" evidence="11">
    <conflict type="erroneous initiation">
        <sequence resource="EMBL-CDS" id="BAC65697"/>
    </conflict>
</comment>
<name>SEPT9_MOUSE</name>
<reference key="1">
    <citation type="journal article" date="2000" name="J. Virol.">
        <title>Sint1, a common integration site in SL3-3-induced T-cell lymphomas, harbors a putative proto-oncogene with homology to the septin gene family.</title>
        <authorList>
            <person name="Soerensen A.B."/>
            <person name="Lund A.H."/>
            <person name="Ethelberg S."/>
            <person name="Copeland N.G."/>
            <person name="Jenkins N.A."/>
            <person name="Pedersen F.S."/>
        </authorList>
    </citation>
    <scope>NUCLEOTIDE SEQUENCE [MRNA] (ISOFORM 2)</scope>
    <scope>TISSUE SPECIFICITY</scope>
</reference>
<reference key="2">
    <citation type="journal article" date="2002" name="Gene">
        <title>Alternative splicing, expression, and gene structure of the septin-like putative proto-oncogene Sint1.</title>
        <authorList>
            <person name="Soerensen A.B."/>
            <person name="Warming S."/>
            <person name="Fuechtbauer E.-M."/>
            <person name="Pedersen F.S."/>
        </authorList>
    </citation>
    <scope>NUCLEOTIDE SEQUENCE [GENOMIC DNA]</scope>
    <scope>ALTERNATIVE SPLICING (ISOFORM 2)</scope>
    <scope>TISSUE SPECIFICITY</scope>
    <scope>DEVELOPMENTAL STAGE</scope>
</reference>
<reference key="3">
    <citation type="journal article" date="2003" name="DNA Res.">
        <title>Prediction of the coding sequences of mouse homologues of KIAA gene: II. The complete nucleotide sequences of 400 mouse KIAA-homologous cDNAs identified by screening of terminal sequences of cDNA clones randomly sampled from size-fractionated libraries.</title>
        <authorList>
            <person name="Okazaki N."/>
            <person name="Kikuno R."/>
            <person name="Ohara R."/>
            <person name="Inamoto S."/>
            <person name="Aizawa H."/>
            <person name="Yuasa S."/>
            <person name="Nakajima D."/>
            <person name="Nagase T."/>
            <person name="Ohara O."/>
            <person name="Koga H."/>
        </authorList>
    </citation>
    <scope>NUCLEOTIDE SEQUENCE [LARGE SCALE MRNA] (ISOFORM 3)</scope>
    <source>
        <tissue>Embryonic tail</tissue>
    </source>
</reference>
<reference key="4">
    <citation type="submission" date="2004-06" db="EMBL/GenBank/DDBJ databases">
        <authorList>
            <person name="Okazaki N."/>
            <person name="Kikuno R."/>
            <person name="Nagase T."/>
            <person name="Ohara O."/>
            <person name="Koga H."/>
        </authorList>
    </citation>
    <scope>SEQUENCE REVISION</scope>
</reference>
<reference key="5">
    <citation type="journal article" date="2005" name="Science">
        <title>The transcriptional landscape of the mammalian genome.</title>
        <authorList>
            <person name="Carninci P."/>
            <person name="Kasukawa T."/>
            <person name="Katayama S."/>
            <person name="Gough J."/>
            <person name="Frith M.C."/>
            <person name="Maeda N."/>
            <person name="Oyama R."/>
            <person name="Ravasi T."/>
            <person name="Lenhard B."/>
            <person name="Wells C."/>
            <person name="Kodzius R."/>
            <person name="Shimokawa K."/>
            <person name="Bajic V.B."/>
            <person name="Brenner S.E."/>
            <person name="Batalov S."/>
            <person name="Forrest A.R."/>
            <person name="Zavolan M."/>
            <person name="Davis M.J."/>
            <person name="Wilming L.G."/>
            <person name="Aidinis V."/>
            <person name="Allen J.E."/>
            <person name="Ambesi-Impiombato A."/>
            <person name="Apweiler R."/>
            <person name="Aturaliya R.N."/>
            <person name="Bailey T.L."/>
            <person name="Bansal M."/>
            <person name="Baxter L."/>
            <person name="Beisel K.W."/>
            <person name="Bersano T."/>
            <person name="Bono H."/>
            <person name="Chalk A.M."/>
            <person name="Chiu K.P."/>
            <person name="Choudhary V."/>
            <person name="Christoffels A."/>
            <person name="Clutterbuck D.R."/>
            <person name="Crowe M.L."/>
            <person name="Dalla E."/>
            <person name="Dalrymple B.P."/>
            <person name="de Bono B."/>
            <person name="Della Gatta G."/>
            <person name="di Bernardo D."/>
            <person name="Down T."/>
            <person name="Engstrom P."/>
            <person name="Fagiolini M."/>
            <person name="Faulkner G."/>
            <person name="Fletcher C.F."/>
            <person name="Fukushima T."/>
            <person name="Furuno M."/>
            <person name="Futaki S."/>
            <person name="Gariboldi M."/>
            <person name="Georgii-Hemming P."/>
            <person name="Gingeras T.R."/>
            <person name="Gojobori T."/>
            <person name="Green R.E."/>
            <person name="Gustincich S."/>
            <person name="Harbers M."/>
            <person name="Hayashi Y."/>
            <person name="Hensch T.K."/>
            <person name="Hirokawa N."/>
            <person name="Hill D."/>
            <person name="Huminiecki L."/>
            <person name="Iacono M."/>
            <person name="Ikeo K."/>
            <person name="Iwama A."/>
            <person name="Ishikawa T."/>
            <person name="Jakt M."/>
            <person name="Kanapin A."/>
            <person name="Katoh M."/>
            <person name="Kawasawa Y."/>
            <person name="Kelso J."/>
            <person name="Kitamura H."/>
            <person name="Kitano H."/>
            <person name="Kollias G."/>
            <person name="Krishnan S.P."/>
            <person name="Kruger A."/>
            <person name="Kummerfeld S.K."/>
            <person name="Kurochkin I.V."/>
            <person name="Lareau L.F."/>
            <person name="Lazarevic D."/>
            <person name="Lipovich L."/>
            <person name="Liu J."/>
            <person name="Liuni S."/>
            <person name="McWilliam S."/>
            <person name="Madan Babu M."/>
            <person name="Madera M."/>
            <person name="Marchionni L."/>
            <person name="Matsuda H."/>
            <person name="Matsuzawa S."/>
            <person name="Miki H."/>
            <person name="Mignone F."/>
            <person name="Miyake S."/>
            <person name="Morris K."/>
            <person name="Mottagui-Tabar S."/>
            <person name="Mulder N."/>
            <person name="Nakano N."/>
            <person name="Nakauchi H."/>
            <person name="Ng P."/>
            <person name="Nilsson R."/>
            <person name="Nishiguchi S."/>
            <person name="Nishikawa S."/>
            <person name="Nori F."/>
            <person name="Ohara O."/>
            <person name="Okazaki Y."/>
            <person name="Orlando V."/>
            <person name="Pang K.C."/>
            <person name="Pavan W.J."/>
            <person name="Pavesi G."/>
            <person name="Pesole G."/>
            <person name="Petrovsky N."/>
            <person name="Piazza S."/>
            <person name="Reed J."/>
            <person name="Reid J.F."/>
            <person name="Ring B.Z."/>
            <person name="Ringwald M."/>
            <person name="Rost B."/>
            <person name="Ruan Y."/>
            <person name="Salzberg S.L."/>
            <person name="Sandelin A."/>
            <person name="Schneider C."/>
            <person name="Schoenbach C."/>
            <person name="Sekiguchi K."/>
            <person name="Semple C.A."/>
            <person name="Seno S."/>
            <person name="Sessa L."/>
            <person name="Sheng Y."/>
            <person name="Shibata Y."/>
            <person name="Shimada H."/>
            <person name="Shimada K."/>
            <person name="Silva D."/>
            <person name="Sinclair B."/>
            <person name="Sperling S."/>
            <person name="Stupka E."/>
            <person name="Sugiura K."/>
            <person name="Sultana R."/>
            <person name="Takenaka Y."/>
            <person name="Taki K."/>
            <person name="Tammoja K."/>
            <person name="Tan S.L."/>
            <person name="Tang S."/>
            <person name="Taylor M.S."/>
            <person name="Tegner J."/>
            <person name="Teichmann S.A."/>
            <person name="Ueda H.R."/>
            <person name="van Nimwegen E."/>
            <person name="Verardo R."/>
            <person name="Wei C.L."/>
            <person name="Yagi K."/>
            <person name="Yamanishi H."/>
            <person name="Zabarovsky E."/>
            <person name="Zhu S."/>
            <person name="Zimmer A."/>
            <person name="Hide W."/>
            <person name="Bult C."/>
            <person name="Grimmond S.M."/>
            <person name="Teasdale R.D."/>
            <person name="Liu E.T."/>
            <person name="Brusic V."/>
            <person name="Quackenbush J."/>
            <person name="Wahlestedt C."/>
            <person name="Mattick J.S."/>
            <person name="Hume D.A."/>
            <person name="Kai C."/>
            <person name="Sasaki D."/>
            <person name="Tomaru Y."/>
            <person name="Fukuda S."/>
            <person name="Kanamori-Katayama M."/>
            <person name="Suzuki M."/>
            <person name="Aoki J."/>
            <person name="Arakawa T."/>
            <person name="Iida J."/>
            <person name="Imamura K."/>
            <person name="Itoh M."/>
            <person name="Kato T."/>
            <person name="Kawaji H."/>
            <person name="Kawagashira N."/>
            <person name="Kawashima T."/>
            <person name="Kojima M."/>
            <person name="Kondo S."/>
            <person name="Konno H."/>
            <person name="Nakano K."/>
            <person name="Ninomiya N."/>
            <person name="Nishio T."/>
            <person name="Okada M."/>
            <person name="Plessy C."/>
            <person name="Shibata K."/>
            <person name="Shiraki T."/>
            <person name="Suzuki S."/>
            <person name="Tagami M."/>
            <person name="Waki K."/>
            <person name="Watahiki A."/>
            <person name="Okamura-Oho Y."/>
            <person name="Suzuki H."/>
            <person name="Kawai J."/>
            <person name="Hayashizaki Y."/>
        </authorList>
    </citation>
    <scope>NUCLEOTIDE SEQUENCE [LARGE SCALE MRNA] (ISOFORMS 1 AND 2)</scope>
    <source>
        <strain>C57BL/6J</strain>
        <tissue>Head</tissue>
    </source>
</reference>
<reference key="6">
    <citation type="journal article" date="2009" name="PLoS Biol.">
        <title>Lineage-specific biology revealed by a finished genome assembly of the mouse.</title>
        <authorList>
            <person name="Church D.M."/>
            <person name="Goodstadt L."/>
            <person name="Hillier L.W."/>
            <person name="Zody M.C."/>
            <person name="Goldstein S."/>
            <person name="She X."/>
            <person name="Bult C.J."/>
            <person name="Agarwala R."/>
            <person name="Cherry J.L."/>
            <person name="DiCuccio M."/>
            <person name="Hlavina W."/>
            <person name="Kapustin Y."/>
            <person name="Meric P."/>
            <person name="Maglott D."/>
            <person name="Birtle Z."/>
            <person name="Marques A.C."/>
            <person name="Graves T."/>
            <person name="Zhou S."/>
            <person name="Teague B."/>
            <person name="Potamousis K."/>
            <person name="Churas C."/>
            <person name="Place M."/>
            <person name="Herschleb J."/>
            <person name="Runnheim R."/>
            <person name="Forrest D."/>
            <person name="Amos-Landgraf J."/>
            <person name="Schwartz D.C."/>
            <person name="Cheng Z."/>
            <person name="Lindblad-Toh K."/>
            <person name="Eichler E.E."/>
            <person name="Ponting C.P."/>
        </authorList>
    </citation>
    <scope>NUCLEOTIDE SEQUENCE [LARGE SCALE GENOMIC DNA]</scope>
    <source>
        <strain>C57BL/6J</strain>
    </source>
</reference>
<reference key="7">
    <citation type="journal article" date="2004" name="Genome Res.">
        <title>The status, quality, and expansion of the NIH full-length cDNA project: the Mammalian Gene Collection (MGC).</title>
        <authorList>
            <consortium name="The MGC Project Team"/>
        </authorList>
    </citation>
    <scope>NUCLEOTIDE SEQUENCE [LARGE SCALE MRNA] (ISOFORM 1)</scope>
    <source>
        <strain>129</strain>
        <tissue>Mammary gland</tissue>
    </source>
</reference>
<reference key="8">
    <citation type="submission" date="2009-01" db="UniProtKB">
        <authorList>
            <person name="Lubec G."/>
            <person name="Sunyer B."/>
            <person name="Chen W.-Q."/>
        </authorList>
    </citation>
    <scope>PROTEIN SEQUENCE OF 548-559</scope>
    <scope>IDENTIFICATION BY MASS SPECTROMETRY</scope>
    <source>
        <strain>OF1</strain>
        <tissue>Hippocampus</tissue>
    </source>
</reference>
<reference key="9">
    <citation type="journal article" date="2007" name="Hum. Mutat.">
        <title>SEPT9 sequence alternations causing hereditary neuralgic amyotrophy are associated with altered interactions with SEPT4/SEPT11 and resistance to Rho/Rhotekin-signaling.</title>
        <authorList>
            <person name="Sudo K."/>
            <person name="Ito H."/>
            <person name="Iwamoto I."/>
            <person name="Morishita R."/>
            <person name="Asano T."/>
            <person name="Nagata K."/>
        </authorList>
    </citation>
    <scope>SUBCELLULAR LOCATION</scope>
</reference>
<reference key="10">
    <citation type="journal article" date="2007" name="Proc. Natl. Acad. Sci. U.S.A.">
        <title>Large-scale phosphorylation analysis of mouse liver.</title>
        <authorList>
            <person name="Villen J."/>
            <person name="Beausoleil S.A."/>
            <person name="Gerber S.A."/>
            <person name="Gygi S.P."/>
        </authorList>
    </citation>
    <scope>PHOSPHORYLATION [LARGE SCALE ANALYSIS] AT SER-30</scope>
    <scope>IDENTIFICATION BY MASS SPECTROMETRY [LARGE SCALE ANALYSIS]</scope>
    <source>
        <tissue>Liver</tissue>
    </source>
</reference>
<reference key="11">
    <citation type="journal article" date="2010" name="Cell">
        <title>A tissue-specific atlas of mouse protein phosphorylation and expression.</title>
        <authorList>
            <person name="Huttlin E.L."/>
            <person name="Jedrychowski M.P."/>
            <person name="Elias J.E."/>
            <person name="Goswami T."/>
            <person name="Rad R."/>
            <person name="Beausoleil S.A."/>
            <person name="Villen J."/>
            <person name="Haas W."/>
            <person name="Sowa M.E."/>
            <person name="Gygi S.P."/>
        </authorList>
    </citation>
    <scope>PHOSPHORYLATION [LARGE SCALE ANALYSIS] AT SER-30; THR-49 AND THR-143</scope>
    <scope>IDENTIFICATION BY MASS SPECTROMETRY [LARGE SCALE ANALYSIS]</scope>
    <source>
        <tissue>Brain</tissue>
        <tissue>Brown adipose tissue</tissue>
        <tissue>Heart</tissue>
        <tissue>Kidney</tissue>
        <tissue>Liver</tissue>
        <tissue>Lung</tissue>
        <tissue>Pancreas</tissue>
        <tissue>Spleen</tissue>
        <tissue>Testis</tissue>
    </source>
</reference>
<reference key="12">
    <citation type="journal article" date="2013" name="Mol. Cell">
        <title>SIRT5-mediated lysine desuccinylation impacts diverse metabolic pathways.</title>
        <authorList>
            <person name="Park J."/>
            <person name="Chen Y."/>
            <person name="Tishkoff D.X."/>
            <person name="Peng C."/>
            <person name="Tan M."/>
            <person name="Dai L."/>
            <person name="Xie Z."/>
            <person name="Zhang Y."/>
            <person name="Zwaans B.M."/>
            <person name="Skinner M.E."/>
            <person name="Lombard D.B."/>
            <person name="Zhao Y."/>
        </authorList>
    </citation>
    <scope>ACETYLATION [LARGE SCALE ANALYSIS] AT LYS-62</scope>
    <scope>IDENTIFICATION BY MASS SPECTROMETRY [LARGE SCALE ANALYSIS]</scope>
    <source>
        <tissue>Embryonic fibroblast</tissue>
    </source>
</reference>
<gene>
    <name evidence="12" type="primary">Septin9</name>
    <name evidence="9" type="synonym">Kiaa0991</name>
    <name evidence="12" type="synonym">Sept9</name>
    <name evidence="8" type="synonym">Sint1</name>
</gene>
<feature type="chain" id="PRO_0000173536" description="Septin-9">
    <location>
        <begin position="1"/>
        <end position="583"/>
    </location>
</feature>
<feature type="domain" description="Septin-type G" evidence="3">
    <location>
        <begin position="293"/>
        <end position="565"/>
    </location>
</feature>
<feature type="region of interest" description="Disordered" evidence="4">
    <location>
        <begin position="1"/>
        <end position="49"/>
    </location>
</feature>
<feature type="region of interest" description="Disordered" evidence="4">
    <location>
        <begin position="79"/>
        <end position="105"/>
    </location>
</feature>
<feature type="region of interest" description="Disordered" evidence="4">
    <location>
        <begin position="166"/>
        <end position="252"/>
    </location>
</feature>
<feature type="region of interest" description="G1 motif" evidence="3">
    <location>
        <begin position="303"/>
        <end position="310"/>
    </location>
</feature>
<feature type="region of interest" description="G3 motif" evidence="3">
    <location>
        <begin position="360"/>
        <end position="363"/>
    </location>
</feature>
<feature type="region of interest" description="G4 motif" evidence="3">
    <location>
        <begin position="442"/>
        <end position="445"/>
    </location>
</feature>
<feature type="compositionally biased region" description="Polar residues" evidence="4">
    <location>
        <begin position="1"/>
        <end position="14"/>
    </location>
</feature>
<feature type="compositionally biased region" description="Polar residues" evidence="4">
    <location>
        <begin position="204"/>
        <end position="221"/>
    </location>
</feature>
<feature type="binding site" evidence="1">
    <location>
        <begin position="303"/>
        <end position="310"/>
    </location>
    <ligand>
        <name>GTP</name>
        <dbReference type="ChEBI" id="CHEBI:37565"/>
    </ligand>
</feature>
<feature type="binding site" evidence="1">
    <location>
        <position position="337"/>
    </location>
    <ligand>
        <name>GTP</name>
        <dbReference type="ChEBI" id="CHEBI:37565"/>
    </ligand>
</feature>
<feature type="binding site" evidence="1">
    <location>
        <position position="363"/>
    </location>
    <ligand>
        <name>GTP</name>
        <dbReference type="ChEBI" id="CHEBI:37565"/>
    </ligand>
</feature>
<feature type="binding site" evidence="1">
    <location>
        <begin position="443"/>
        <end position="451"/>
    </location>
    <ligand>
        <name>GTP</name>
        <dbReference type="ChEBI" id="CHEBI:37565"/>
    </ligand>
</feature>
<feature type="binding site" evidence="1">
    <location>
        <position position="499"/>
    </location>
    <ligand>
        <name>GTP</name>
        <dbReference type="ChEBI" id="CHEBI:37565"/>
    </ligand>
</feature>
<feature type="binding site" evidence="1">
    <location>
        <position position="514"/>
    </location>
    <ligand>
        <name>GTP</name>
        <dbReference type="ChEBI" id="CHEBI:37565"/>
    </ligand>
</feature>
<feature type="modified residue" description="N-acetylmethionine" evidence="2">
    <location>
        <position position="1"/>
    </location>
</feature>
<feature type="modified residue" description="Phosphoserine" evidence="13 14">
    <location>
        <position position="30"/>
    </location>
</feature>
<feature type="modified residue" description="Phosphothreonine" evidence="2">
    <location>
        <position position="42"/>
    </location>
</feature>
<feature type="modified residue" description="Phosphothreonine" evidence="14">
    <location>
        <position position="49"/>
    </location>
</feature>
<feature type="modified residue" description="N6-acetyllysine" evidence="15">
    <location>
        <position position="62"/>
    </location>
</feature>
<feature type="modified residue" description="Phosphoserine" evidence="2">
    <location>
        <position position="82"/>
    </location>
</feature>
<feature type="modified residue" description="Phosphoserine" evidence="2">
    <location>
        <position position="85"/>
    </location>
</feature>
<feature type="modified residue" description="Phosphoserine" evidence="2">
    <location>
        <position position="89"/>
    </location>
</feature>
<feature type="modified residue" description="Phosphothreonine" evidence="14">
    <location>
        <position position="143"/>
    </location>
</feature>
<feature type="modified residue" description="Phosphotyrosine" evidence="2">
    <location>
        <position position="276"/>
    </location>
</feature>
<feature type="modified residue" description="Phosphoserine" evidence="2">
    <location>
        <position position="325"/>
    </location>
</feature>
<feature type="modified residue" description="Phosphoserine" evidence="2">
    <location>
        <position position="330"/>
    </location>
</feature>
<feature type="splice variant" id="VSP_012341" description="In isoform 2." evidence="8 10">
    <location>
        <begin position="1"/>
        <end position="249"/>
    </location>
</feature>
<feature type="splice variant" id="VSP_012342" description="In isoform 3." evidence="9">
    <original>MKKSYSGVTRTSSGRLRRLADPTGP</original>
    <variation>MSDPAVNAQLDGIISDFE</variation>
    <location>
        <begin position="1"/>
        <end position="25"/>
    </location>
</feature>
<dbReference type="EMBL" id="AJ250723">
    <property type="protein sequence ID" value="CAB59833.1"/>
    <property type="molecule type" value="mRNA"/>
</dbReference>
<dbReference type="EMBL" id="AF450142">
    <property type="protein sequence ID" value="AAL50685.1"/>
    <property type="molecule type" value="Genomic_DNA"/>
</dbReference>
<dbReference type="EMBL" id="AF450141">
    <property type="protein sequence ID" value="AAL50685.1"/>
    <property type="status" value="JOINED"/>
    <property type="molecule type" value="Genomic_DNA"/>
</dbReference>
<dbReference type="EMBL" id="AK031757">
    <property type="protein sequence ID" value="BAC27538.1"/>
    <property type="molecule type" value="mRNA"/>
</dbReference>
<dbReference type="EMBL" id="AK122415">
    <property type="protein sequence ID" value="BAC65697.2"/>
    <property type="status" value="ALT_INIT"/>
    <property type="molecule type" value="mRNA"/>
</dbReference>
<dbReference type="EMBL" id="AK141312">
    <property type="protein sequence ID" value="BAE24646.1"/>
    <property type="molecule type" value="mRNA"/>
</dbReference>
<dbReference type="EMBL" id="AL603868">
    <property type="status" value="NOT_ANNOTATED_CDS"/>
    <property type="molecule type" value="Genomic_DNA"/>
</dbReference>
<dbReference type="EMBL" id="AL611935">
    <property type="status" value="NOT_ANNOTATED_CDS"/>
    <property type="molecule type" value="Genomic_DNA"/>
</dbReference>
<dbReference type="EMBL" id="AL645975">
    <property type="status" value="NOT_ANNOTATED_CDS"/>
    <property type="molecule type" value="Genomic_DNA"/>
</dbReference>
<dbReference type="EMBL" id="BC046524">
    <property type="protein sequence ID" value="AAH46524.1"/>
    <property type="molecule type" value="mRNA"/>
</dbReference>
<dbReference type="CCDS" id="CCDS25684.1">
    <molecule id="Q80UG5-2"/>
</dbReference>
<dbReference type="CCDS" id="CCDS48990.1">
    <molecule id="Q80UG5-1"/>
</dbReference>
<dbReference type="CCDS" id="CCDS48991.1">
    <molecule id="Q80UG5-3"/>
</dbReference>
<dbReference type="RefSeq" id="NP_001106958.1">
    <molecule id="Q80UG5-1"/>
    <property type="nucleotide sequence ID" value="NM_001113486.1"/>
</dbReference>
<dbReference type="RefSeq" id="NP_001106959.1">
    <molecule id="Q80UG5-3"/>
    <property type="nucleotide sequence ID" value="NM_001113487.1"/>
</dbReference>
<dbReference type="RefSeq" id="NP_001106960.1">
    <molecule id="Q80UG5-2"/>
    <property type="nucleotide sequence ID" value="NM_001113488.1"/>
</dbReference>
<dbReference type="RefSeq" id="NP_059076.1">
    <molecule id="Q80UG5-2"/>
    <property type="nucleotide sequence ID" value="NM_017380.2"/>
</dbReference>
<dbReference type="RefSeq" id="XP_006533808.2">
    <molecule id="Q80UG5-2"/>
    <property type="nucleotide sequence ID" value="XM_006533745.5"/>
</dbReference>
<dbReference type="RefSeq" id="XP_006533809.1">
    <molecule id="Q80UG5-2"/>
    <property type="nucleotide sequence ID" value="XM_006533746.5"/>
</dbReference>
<dbReference type="RefSeq" id="XP_030102013.1">
    <molecule id="Q80UG5-2"/>
    <property type="nucleotide sequence ID" value="XM_030246153.2"/>
</dbReference>
<dbReference type="RefSeq" id="XP_030102014.1">
    <molecule id="Q80UG5-2"/>
    <property type="nucleotide sequence ID" value="XM_030246154.1"/>
</dbReference>
<dbReference type="RefSeq" id="XP_036012742.1">
    <molecule id="Q80UG5-2"/>
    <property type="nucleotide sequence ID" value="XM_036156849.1"/>
</dbReference>
<dbReference type="SMR" id="Q80UG5"/>
<dbReference type="BioGRID" id="207494">
    <property type="interactions" value="58"/>
</dbReference>
<dbReference type="FunCoup" id="Q80UG5">
    <property type="interactions" value="808"/>
</dbReference>
<dbReference type="IntAct" id="Q80UG5">
    <property type="interactions" value="41"/>
</dbReference>
<dbReference type="MINT" id="Q80UG5"/>
<dbReference type="STRING" id="10090.ENSMUSP00000091435"/>
<dbReference type="GlyGen" id="Q80UG5">
    <property type="glycosylation" value="6 sites, 2 N-linked glycans (2 sites), 1 O-linked glycan (3 sites)"/>
</dbReference>
<dbReference type="iPTMnet" id="Q80UG5"/>
<dbReference type="PhosphoSitePlus" id="Q80UG5"/>
<dbReference type="SwissPalm" id="Q80UG5"/>
<dbReference type="jPOST" id="Q80UG5"/>
<dbReference type="PaxDb" id="10090-ENSMUSP00000091435"/>
<dbReference type="PeptideAtlas" id="Q80UG5"/>
<dbReference type="ProteomicsDB" id="257120">
    <molecule id="Q80UG5-1"/>
</dbReference>
<dbReference type="ProteomicsDB" id="257121">
    <molecule id="Q80UG5-2"/>
</dbReference>
<dbReference type="ProteomicsDB" id="257122">
    <molecule id="Q80UG5-3"/>
</dbReference>
<dbReference type="Pumba" id="Q80UG5"/>
<dbReference type="Antibodypedia" id="32488">
    <property type="antibodies" value="240 antibodies from 32 providers"/>
</dbReference>
<dbReference type="DNASU" id="53860"/>
<dbReference type="Ensembl" id="ENSMUST00000019038.15">
    <molecule id="Q80UG5-3"/>
    <property type="protein sequence ID" value="ENSMUSP00000019038.9"/>
    <property type="gene ID" value="ENSMUSG00000059248.14"/>
</dbReference>
<dbReference type="Ensembl" id="ENSMUST00000093907.11">
    <molecule id="Q80UG5-1"/>
    <property type="protein sequence ID" value="ENSMUSP00000091435.5"/>
    <property type="gene ID" value="ENSMUSG00000059248.14"/>
</dbReference>
<dbReference type="Ensembl" id="ENSMUST00000100193.8">
    <molecule id="Q80UG5-2"/>
    <property type="protein sequence ID" value="ENSMUSP00000097767.2"/>
    <property type="gene ID" value="ENSMUSG00000059248.14"/>
</dbReference>
<dbReference type="Ensembl" id="ENSMUST00000106349.2">
    <molecule id="Q80UG5-2"/>
    <property type="protein sequence ID" value="ENSMUSP00000101956.2"/>
    <property type="gene ID" value="ENSMUSG00000059248.14"/>
</dbReference>
<dbReference type="GeneID" id="53860"/>
<dbReference type="KEGG" id="mmu:53860"/>
<dbReference type="UCSC" id="uc007mnd.2">
    <molecule id="Q80UG5-1"/>
    <property type="organism name" value="mouse"/>
</dbReference>
<dbReference type="UCSC" id="uc007mne.2">
    <molecule id="Q80UG5-3"/>
    <property type="organism name" value="mouse"/>
</dbReference>
<dbReference type="AGR" id="MGI:1858222"/>
<dbReference type="CTD" id="10801"/>
<dbReference type="MGI" id="MGI:1858222">
    <property type="gene designation" value="Septin9"/>
</dbReference>
<dbReference type="VEuPathDB" id="HostDB:ENSMUSG00000059248"/>
<dbReference type="eggNOG" id="KOG1547">
    <property type="taxonomic scope" value="Eukaryota"/>
</dbReference>
<dbReference type="GeneTree" id="ENSGT00940000157195"/>
<dbReference type="HOGENOM" id="CLU_017718_7_1_1"/>
<dbReference type="InParanoid" id="Q80UG5"/>
<dbReference type="OrthoDB" id="416553at2759"/>
<dbReference type="PhylomeDB" id="Q80UG5"/>
<dbReference type="TreeFam" id="TF101078"/>
<dbReference type="BioGRID-ORCS" id="53860">
    <property type="hits" value="2 hits in 49 CRISPR screens"/>
</dbReference>
<dbReference type="CD-CODE" id="CE726F99">
    <property type="entry name" value="Postsynaptic density"/>
</dbReference>
<dbReference type="ChiTaRS" id="Sept9">
    <property type="organism name" value="mouse"/>
</dbReference>
<dbReference type="PRO" id="PR:Q80UG5"/>
<dbReference type="Proteomes" id="UP000000589">
    <property type="component" value="Chromosome 11"/>
</dbReference>
<dbReference type="RNAct" id="Q80UG5">
    <property type="molecule type" value="protein"/>
</dbReference>
<dbReference type="Bgee" id="ENSMUSG00000059248">
    <property type="expression patterns" value="Expressed in ectoplacental cone and 236 other cell types or tissues"/>
</dbReference>
<dbReference type="ExpressionAtlas" id="Q80UG5">
    <property type="expression patterns" value="baseline and differential"/>
</dbReference>
<dbReference type="GO" id="GO:0005930">
    <property type="term" value="C:axoneme"/>
    <property type="evidence" value="ECO:0007669"/>
    <property type="project" value="Ensembl"/>
</dbReference>
<dbReference type="GO" id="GO:0045171">
    <property type="term" value="C:intercellular bridge"/>
    <property type="evidence" value="ECO:0007669"/>
    <property type="project" value="Ensembl"/>
</dbReference>
<dbReference type="GO" id="GO:0005874">
    <property type="term" value="C:microtubule"/>
    <property type="evidence" value="ECO:0007669"/>
    <property type="project" value="Ensembl"/>
</dbReference>
<dbReference type="GO" id="GO:0097730">
    <property type="term" value="C:non-motile cilium"/>
    <property type="evidence" value="ECO:0007669"/>
    <property type="project" value="Ensembl"/>
</dbReference>
<dbReference type="GO" id="GO:0048471">
    <property type="term" value="C:perinuclear region of cytoplasm"/>
    <property type="evidence" value="ECO:0007669"/>
    <property type="project" value="Ensembl"/>
</dbReference>
<dbReference type="GO" id="GO:0032991">
    <property type="term" value="C:protein-containing complex"/>
    <property type="evidence" value="ECO:0000247"/>
    <property type="project" value="MGI"/>
</dbReference>
<dbReference type="GO" id="GO:0031105">
    <property type="term" value="C:septin complex"/>
    <property type="evidence" value="ECO:0000314"/>
    <property type="project" value="UniProtKB"/>
</dbReference>
<dbReference type="GO" id="GO:0001725">
    <property type="term" value="C:stress fiber"/>
    <property type="evidence" value="ECO:0007669"/>
    <property type="project" value="Ensembl"/>
</dbReference>
<dbReference type="GO" id="GO:0005525">
    <property type="term" value="F:GTP binding"/>
    <property type="evidence" value="ECO:0007669"/>
    <property type="project" value="UniProtKB-KW"/>
</dbReference>
<dbReference type="GO" id="GO:0030036">
    <property type="term" value="P:actin cytoskeleton organization"/>
    <property type="evidence" value="ECO:0000315"/>
    <property type="project" value="MGI"/>
</dbReference>
<dbReference type="GO" id="GO:0051301">
    <property type="term" value="P:cell division"/>
    <property type="evidence" value="ECO:0007669"/>
    <property type="project" value="UniProtKB-KW"/>
</dbReference>
<dbReference type="GO" id="GO:1902857">
    <property type="term" value="P:positive regulation of non-motile cilium assembly"/>
    <property type="evidence" value="ECO:0007669"/>
    <property type="project" value="Ensembl"/>
</dbReference>
<dbReference type="GO" id="GO:0032185">
    <property type="term" value="P:septin cytoskeleton organization"/>
    <property type="evidence" value="ECO:0000315"/>
    <property type="project" value="MGI"/>
</dbReference>
<dbReference type="CDD" id="cd01850">
    <property type="entry name" value="CDC_Septin"/>
    <property type="match status" value="1"/>
</dbReference>
<dbReference type="FunFam" id="3.40.50.300:FF:000143">
    <property type="entry name" value="septin-9 isoform X1"/>
    <property type="match status" value="1"/>
</dbReference>
<dbReference type="Gene3D" id="3.40.50.300">
    <property type="entry name" value="P-loop containing nucleotide triphosphate hydrolases"/>
    <property type="match status" value="1"/>
</dbReference>
<dbReference type="InterPro" id="IPR030379">
    <property type="entry name" value="G_SEPTIN_dom"/>
</dbReference>
<dbReference type="InterPro" id="IPR027417">
    <property type="entry name" value="P-loop_NTPase"/>
</dbReference>
<dbReference type="InterPro" id="IPR016491">
    <property type="entry name" value="Septin"/>
</dbReference>
<dbReference type="PANTHER" id="PTHR18884">
    <property type="entry name" value="SEPTIN"/>
    <property type="match status" value="1"/>
</dbReference>
<dbReference type="Pfam" id="PF00735">
    <property type="entry name" value="Septin"/>
    <property type="match status" value="1"/>
</dbReference>
<dbReference type="SUPFAM" id="SSF52540">
    <property type="entry name" value="P-loop containing nucleoside triphosphate hydrolases"/>
    <property type="match status" value="1"/>
</dbReference>
<dbReference type="PROSITE" id="PS51719">
    <property type="entry name" value="G_SEPTIN"/>
    <property type="match status" value="1"/>
</dbReference>